<name>TRUD_ECO45</name>
<proteinExistence type="inferred from homology"/>
<accession>B7MKL9</accession>
<feature type="chain" id="PRO_1000136829" description="tRNA pseudouridine synthase D">
    <location>
        <begin position="1"/>
        <end position="349"/>
    </location>
</feature>
<feature type="domain" description="TRUD" evidence="1">
    <location>
        <begin position="155"/>
        <end position="303"/>
    </location>
</feature>
<feature type="active site" description="Nucleophile" evidence="1">
    <location>
        <position position="80"/>
    </location>
</feature>
<feature type="binding site" evidence="1">
    <location>
        <position position="27"/>
    </location>
    <ligand>
        <name>substrate</name>
    </ligand>
</feature>
<feature type="binding site" evidence="1">
    <location>
        <position position="129"/>
    </location>
    <ligand>
        <name>substrate</name>
    </ligand>
</feature>
<feature type="binding site" evidence="1">
    <location>
        <position position="329"/>
    </location>
    <ligand>
        <name>substrate</name>
    </ligand>
</feature>
<reference key="1">
    <citation type="journal article" date="2009" name="PLoS Genet.">
        <title>Organised genome dynamics in the Escherichia coli species results in highly diverse adaptive paths.</title>
        <authorList>
            <person name="Touchon M."/>
            <person name="Hoede C."/>
            <person name="Tenaillon O."/>
            <person name="Barbe V."/>
            <person name="Baeriswyl S."/>
            <person name="Bidet P."/>
            <person name="Bingen E."/>
            <person name="Bonacorsi S."/>
            <person name="Bouchier C."/>
            <person name="Bouvet O."/>
            <person name="Calteau A."/>
            <person name="Chiapello H."/>
            <person name="Clermont O."/>
            <person name="Cruveiller S."/>
            <person name="Danchin A."/>
            <person name="Diard M."/>
            <person name="Dossat C."/>
            <person name="Karoui M.E."/>
            <person name="Frapy E."/>
            <person name="Garry L."/>
            <person name="Ghigo J.M."/>
            <person name="Gilles A.M."/>
            <person name="Johnson J."/>
            <person name="Le Bouguenec C."/>
            <person name="Lescat M."/>
            <person name="Mangenot S."/>
            <person name="Martinez-Jehanne V."/>
            <person name="Matic I."/>
            <person name="Nassif X."/>
            <person name="Oztas S."/>
            <person name="Petit M.A."/>
            <person name="Pichon C."/>
            <person name="Rouy Z."/>
            <person name="Ruf C.S."/>
            <person name="Schneider D."/>
            <person name="Tourret J."/>
            <person name="Vacherie B."/>
            <person name="Vallenet D."/>
            <person name="Medigue C."/>
            <person name="Rocha E.P.C."/>
            <person name="Denamur E."/>
        </authorList>
    </citation>
    <scope>NUCLEOTIDE SEQUENCE [LARGE SCALE GENOMIC DNA]</scope>
    <source>
        <strain>S88 / ExPEC</strain>
    </source>
</reference>
<evidence type="ECO:0000255" key="1">
    <source>
        <dbReference type="HAMAP-Rule" id="MF_01082"/>
    </source>
</evidence>
<comment type="function">
    <text evidence="1">Responsible for synthesis of pseudouridine from uracil-13 in transfer RNAs.</text>
</comment>
<comment type="catalytic activity">
    <reaction evidence="1">
        <text>uridine(13) in tRNA = pseudouridine(13) in tRNA</text>
        <dbReference type="Rhea" id="RHEA:42540"/>
        <dbReference type="Rhea" id="RHEA-COMP:10105"/>
        <dbReference type="Rhea" id="RHEA-COMP:10106"/>
        <dbReference type="ChEBI" id="CHEBI:65314"/>
        <dbReference type="ChEBI" id="CHEBI:65315"/>
        <dbReference type="EC" id="5.4.99.27"/>
    </reaction>
</comment>
<comment type="similarity">
    <text evidence="1">Belongs to the pseudouridine synthase TruD family.</text>
</comment>
<protein>
    <recommendedName>
        <fullName evidence="1">tRNA pseudouridine synthase D</fullName>
        <ecNumber evidence="1">5.4.99.27</ecNumber>
    </recommendedName>
    <alternativeName>
        <fullName evidence="1">tRNA pseudouridine(13) synthase</fullName>
    </alternativeName>
    <alternativeName>
        <fullName evidence="1">tRNA pseudouridylate synthase D</fullName>
    </alternativeName>
    <alternativeName>
        <fullName evidence="1">tRNA-uridine isomerase D</fullName>
    </alternativeName>
</protein>
<organism>
    <name type="scientific">Escherichia coli O45:K1 (strain S88 / ExPEC)</name>
    <dbReference type="NCBI Taxonomy" id="585035"/>
    <lineage>
        <taxon>Bacteria</taxon>
        <taxon>Pseudomonadati</taxon>
        <taxon>Pseudomonadota</taxon>
        <taxon>Gammaproteobacteria</taxon>
        <taxon>Enterobacterales</taxon>
        <taxon>Enterobacteriaceae</taxon>
        <taxon>Escherichia</taxon>
    </lineage>
</organism>
<keyword id="KW-0413">Isomerase</keyword>
<keyword id="KW-1185">Reference proteome</keyword>
<keyword id="KW-0819">tRNA processing</keyword>
<sequence>MIEFDNLTYLHGKPQGTGLLKANPEDFVVVEDLGFEPDGEGEHILVRILKNGCNTRFVADALAKFLKIHAREVSFAGQKDKHAVTEQWLCARVPGKEMPDLSAFQLEGCQVLEYARHKRKLRLGALKGNAFTLVLREVSNRDDVEQRLIDICVKGVPNYFGAQRFGIGGSNLQGALRWAQTNTPVRDRNKRSFWLSAARSALFNQIVAERLKKADVNQVVDGDALQLAGRGSWFVATTEELAELQRRVNDKELMITAALPGSGEWGTQREALAFEQAAVAEETELQTLLVREKVEAARRAMLLYPQQLSWNWWDDVTVEIHFWLPAGSFATSVVRELINTTGDYAHIAE</sequence>
<gene>
    <name evidence="1" type="primary">truD</name>
    <name type="ordered locus">ECS88_3015</name>
</gene>
<dbReference type="EC" id="5.4.99.27" evidence="1"/>
<dbReference type="EMBL" id="CU928161">
    <property type="protein sequence ID" value="CAR04260.1"/>
    <property type="molecule type" value="Genomic_DNA"/>
</dbReference>
<dbReference type="RefSeq" id="WP_000568928.1">
    <property type="nucleotide sequence ID" value="NC_011742.1"/>
</dbReference>
<dbReference type="SMR" id="B7MKL9"/>
<dbReference type="KEGG" id="ecz:ECS88_3015"/>
<dbReference type="HOGENOM" id="CLU_005281_4_0_6"/>
<dbReference type="Proteomes" id="UP000000747">
    <property type="component" value="Chromosome"/>
</dbReference>
<dbReference type="GO" id="GO:0005829">
    <property type="term" value="C:cytosol"/>
    <property type="evidence" value="ECO:0007669"/>
    <property type="project" value="TreeGrafter"/>
</dbReference>
<dbReference type="GO" id="GO:0003723">
    <property type="term" value="F:RNA binding"/>
    <property type="evidence" value="ECO:0007669"/>
    <property type="project" value="InterPro"/>
</dbReference>
<dbReference type="GO" id="GO:0160150">
    <property type="term" value="F:tRNA pseudouridine(13) synthase activity"/>
    <property type="evidence" value="ECO:0007669"/>
    <property type="project" value="UniProtKB-EC"/>
</dbReference>
<dbReference type="GO" id="GO:0031119">
    <property type="term" value="P:tRNA pseudouridine synthesis"/>
    <property type="evidence" value="ECO:0007669"/>
    <property type="project" value="UniProtKB-UniRule"/>
</dbReference>
<dbReference type="CDD" id="cd02575">
    <property type="entry name" value="PseudoU_synth_EcTruD"/>
    <property type="match status" value="1"/>
</dbReference>
<dbReference type="FunFam" id="3.30.2340.10:FF:000001">
    <property type="entry name" value="tRNA pseudouridine synthase D"/>
    <property type="match status" value="1"/>
</dbReference>
<dbReference type="FunFam" id="3.30.2350.20:FF:000001">
    <property type="entry name" value="tRNA pseudouridine synthase D"/>
    <property type="match status" value="1"/>
</dbReference>
<dbReference type="Gene3D" id="3.30.2350.20">
    <property type="entry name" value="TruD, catalytic domain"/>
    <property type="match status" value="1"/>
</dbReference>
<dbReference type="Gene3D" id="3.30.2340.10">
    <property type="entry name" value="TruD, insertion domain"/>
    <property type="match status" value="1"/>
</dbReference>
<dbReference type="HAMAP" id="MF_01082">
    <property type="entry name" value="TruD"/>
    <property type="match status" value="1"/>
</dbReference>
<dbReference type="InterPro" id="IPR020103">
    <property type="entry name" value="PsdUridine_synth_cat_dom_sf"/>
</dbReference>
<dbReference type="InterPro" id="IPR001656">
    <property type="entry name" value="PsdUridine_synth_TruD"/>
</dbReference>
<dbReference type="InterPro" id="IPR020119">
    <property type="entry name" value="PsdUridine_synth_TruD_CS"/>
</dbReference>
<dbReference type="InterPro" id="IPR011760">
    <property type="entry name" value="PsdUridine_synth_TruD_insert"/>
</dbReference>
<dbReference type="InterPro" id="IPR042214">
    <property type="entry name" value="TruD_catalytic"/>
</dbReference>
<dbReference type="InterPro" id="IPR043165">
    <property type="entry name" value="TruD_insert_sf"/>
</dbReference>
<dbReference type="InterPro" id="IPR050170">
    <property type="entry name" value="TruD_pseudoU_synthase"/>
</dbReference>
<dbReference type="NCBIfam" id="NF002155">
    <property type="entry name" value="PRK00984.1-4"/>
    <property type="match status" value="1"/>
</dbReference>
<dbReference type="NCBIfam" id="TIGR00094">
    <property type="entry name" value="tRNA_TruD_broad"/>
    <property type="match status" value="1"/>
</dbReference>
<dbReference type="PANTHER" id="PTHR47811">
    <property type="entry name" value="TRNA PSEUDOURIDINE SYNTHASE D"/>
    <property type="match status" value="1"/>
</dbReference>
<dbReference type="PANTHER" id="PTHR47811:SF1">
    <property type="entry name" value="TRNA PSEUDOURIDINE SYNTHASE D"/>
    <property type="match status" value="1"/>
</dbReference>
<dbReference type="Pfam" id="PF01142">
    <property type="entry name" value="TruD"/>
    <property type="match status" value="2"/>
</dbReference>
<dbReference type="SUPFAM" id="SSF55120">
    <property type="entry name" value="Pseudouridine synthase"/>
    <property type="match status" value="1"/>
</dbReference>
<dbReference type="PROSITE" id="PS50984">
    <property type="entry name" value="TRUD"/>
    <property type="match status" value="1"/>
</dbReference>
<dbReference type="PROSITE" id="PS01268">
    <property type="entry name" value="UPF0024"/>
    <property type="match status" value="1"/>
</dbReference>